<gene>
    <name evidence="1" type="primary">rpsQ</name>
    <name type="ordered locus">DVU_1312</name>
</gene>
<protein>
    <recommendedName>
        <fullName evidence="1">Small ribosomal subunit protein uS17</fullName>
    </recommendedName>
    <alternativeName>
        <fullName evidence="2">30S ribosomal protein S17</fullName>
    </alternativeName>
</protein>
<proteinExistence type="inferred from homology"/>
<name>RS17_NITV2</name>
<keyword id="KW-1185">Reference proteome</keyword>
<keyword id="KW-0687">Ribonucleoprotein</keyword>
<keyword id="KW-0689">Ribosomal protein</keyword>
<keyword id="KW-0694">RNA-binding</keyword>
<keyword id="KW-0699">rRNA-binding</keyword>
<organism>
    <name type="scientific">Nitratidesulfovibrio vulgaris (strain ATCC 29579 / DSM 644 / CCUG 34227 / NCIMB 8303 / VKM B-1760 / Hildenborough)</name>
    <name type="common">Desulfovibrio vulgaris</name>
    <dbReference type="NCBI Taxonomy" id="882"/>
    <lineage>
        <taxon>Bacteria</taxon>
        <taxon>Pseudomonadati</taxon>
        <taxon>Thermodesulfobacteriota</taxon>
        <taxon>Desulfovibrionia</taxon>
        <taxon>Desulfovibrionales</taxon>
        <taxon>Desulfovibrionaceae</taxon>
        <taxon>Nitratidesulfovibrio</taxon>
    </lineage>
</organism>
<accession>Q72CH1</accession>
<dbReference type="EMBL" id="AE017285">
    <property type="protein sequence ID" value="AAS95790.1"/>
    <property type="molecule type" value="Genomic_DNA"/>
</dbReference>
<dbReference type="RefSeq" id="WP_010938607.1">
    <property type="nucleotide sequence ID" value="NC_002937.3"/>
</dbReference>
<dbReference type="RefSeq" id="YP_010531.1">
    <property type="nucleotide sequence ID" value="NC_002937.3"/>
</dbReference>
<dbReference type="SMR" id="Q72CH1"/>
<dbReference type="STRING" id="882.DVU_1312"/>
<dbReference type="PaxDb" id="882-DVU_1312"/>
<dbReference type="EnsemblBacteria" id="AAS95790">
    <property type="protein sequence ID" value="AAS95790"/>
    <property type="gene ID" value="DVU_1312"/>
</dbReference>
<dbReference type="KEGG" id="dvu:DVU_1312"/>
<dbReference type="PATRIC" id="fig|882.5.peg.1224"/>
<dbReference type="eggNOG" id="COG0186">
    <property type="taxonomic scope" value="Bacteria"/>
</dbReference>
<dbReference type="HOGENOM" id="CLU_073626_1_0_7"/>
<dbReference type="OrthoDB" id="9811714at2"/>
<dbReference type="PhylomeDB" id="Q72CH1"/>
<dbReference type="Proteomes" id="UP000002194">
    <property type="component" value="Chromosome"/>
</dbReference>
<dbReference type="GO" id="GO:0022627">
    <property type="term" value="C:cytosolic small ribosomal subunit"/>
    <property type="evidence" value="ECO:0007669"/>
    <property type="project" value="TreeGrafter"/>
</dbReference>
<dbReference type="GO" id="GO:0019843">
    <property type="term" value="F:rRNA binding"/>
    <property type="evidence" value="ECO:0007669"/>
    <property type="project" value="UniProtKB-UniRule"/>
</dbReference>
<dbReference type="GO" id="GO:0003735">
    <property type="term" value="F:structural constituent of ribosome"/>
    <property type="evidence" value="ECO:0007669"/>
    <property type="project" value="InterPro"/>
</dbReference>
<dbReference type="GO" id="GO:0006412">
    <property type="term" value="P:translation"/>
    <property type="evidence" value="ECO:0007669"/>
    <property type="project" value="UniProtKB-UniRule"/>
</dbReference>
<dbReference type="CDD" id="cd00364">
    <property type="entry name" value="Ribosomal_uS17"/>
    <property type="match status" value="1"/>
</dbReference>
<dbReference type="Gene3D" id="2.40.50.140">
    <property type="entry name" value="Nucleic acid-binding proteins"/>
    <property type="match status" value="1"/>
</dbReference>
<dbReference type="HAMAP" id="MF_01345_B">
    <property type="entry name" value="Ribosomal_uS17_B"/>
    <property type="match status" value="1"/>
</dbReference>
<dbReference type="InterPro" id="IPR012340">
    <property type="entry name" value="NA-bd_OB-fold"/>
</dbReference>
<dbReference type="InterPro" id="IPR000266">
    <property type="entry name" value="Ribosomal_uS17"/>
</dbReference>
<dbReference type="InterPro" id="IPR019984">
    <property type="entry name" value="Ribosomal_uS17_bact/chlr"/>
</dbReference>
<dbReference type="InterPro" id="IPR019979">
    <property type="entry name" value="Ribosomal_uS17_CS"/>
</dbReference>
<dbReference type="NCBIfam" id="NF004123">
    <property type="entry name" value="PRK05610.1"/>
    <property type="match status" value="1"/>
</dbReference>
<dbReference type="NCBIfam" id="TIGR03635">
    <property type="entry name" value="uS17_bact"/>
    <property type="match status" value="1"/>
</dbReference>
<dbReference type="PANTHER" id="PTHR10744">
    <property type="entry name" value="40S RIBOSOMAL PROTEIN S11 FAMILY MEMBER"/>
    <property type="match status" value="1"/>
</dbReference>
<dbReference type="PANTHER" id="PTHR10744:SF1">
    <property type="entry name" value="SMALL RIBOSOMAL SUBUNIT PROTEIN US17M"/>
    <property type="match status" value="1"/>
</dbReference>
<dbReference type="Pfam" id="PF00366">
    <property type="entry name" value="Ribosomal_S17"/>
    <property type="match status" value="1"/>
</dbReference>
<dbReference type="PRINTS" id="PR00973">
    <property type="entry name" value="RIBOSOMALS17"/>
</dbReference>
<dbReference type="SUPFAM" id="SSF50249">
    <property type="entry name" value="Nucleic acid-binding proteins"/>
    <property type="match status" value="1"/>
</dbReference>
<dbReference type="PROSITE" id="PS00056">
    <property type="entry name" value="RIBOSOMAL_S17"/>
    <property type="match status" value="1"/>
</dbReference>
<feature type="chain" id="PRO_0000233474" description="Small ribosomal subunit protein uS17">
    <location>
        <begin position="1"/>
        <end position="88"/>
    </location>
</feature>
<sequence>MSEATYQRKGRTLVGIVVSDKNDKTIVVRVETLVKHPLLKKYVRRRKKFTAHDPMNECGIGDKVKIIEFRPLSRNKRWHLESILEKAV</sequence>
<reference key="1">
    <citation type="journal article" date="2004" name="Nat. Biotechnol.">
        <title>The genome sequence of the anaerobic, sulfate-reducing bacterium Desulfovibrio vulgaris Hildenborough.</title>
        <authorList>
            <person name="Heidelberg J.F."/>
            <person name="Seshadri R."/>
            <person name="Haveman S.A."/>
            <person name="Hemme C.L."/>
            <person name="Paulsen I.T."/>
            <person name="Kolonay J.F."/>
            <person name="Eisen J.A."/>
            <person name="Ward N.L."/>
            <person name="Methe B.A."/>
            <person name="Brinkac L.M."/>
            <person name="Daugherty S.C."/>
            <person name="DeBoy R.T."/>
            <person name="Dodson R.J."/>
            <person name="Durkin A.S."/>
            <person name="Madupu R."/>
            <person name="Nelson W.C."/>
            <person name="Sullivan S.A."/>
            <person name="Fouts D.E."/>
            <person name="Haft D.H."/>
            <person name="Selengut J."/>
            <person name="Peterson J.D."/>
            <person name="Davidsen T.M."/>
            <person name="Zafar N."/>
            <person name="Zhou L."/>
            <person name="Radune D."/>
            <person name="Dimitrov G."/>
            <person name="Hance M."/>
            <person name="Tran K."/>
            <person name="Khouri H.M."/>
            <person name="Gill J."/>
            <person name="Utterback T.R."/>
            <person name="Feldblyum T.V."/>
            <person name="Wall J.D."/>
            <person name="Voordouw G."/>
            <person name="Fraser C.M."/>
        </authorList>
    </citation>
    <scope>NUCLEOTIDE SEQUENCE [LARGE SCALE GENOMIC DNA]</scope>
    <source>
        <strain>ATCC 29579 / DSM 644 / CCUG 34227 / NCIMB 8303 / VKM B-1760 / Hildenborough</strain>
    </source>
</reference>
<comment type="function">
    <text evidence="1">One of the primary rRNA binding proteins, it binds specifically to the 5'-end of 16S ribosomal RNA.</text>
</comment>
<comment type="subunit">
    <text evidence="1">Part of the 30S ribosomal subunit.</text>
</comment>
<comment type="similarity">
    <text evidence="1">Belongs to the universal ribosomal protein uS17 family.</text>
</comment>
<evidence type="ECO:0000255" key="1">
    <source>
        <dbReference type="HAMAP-Rule" id="MF_01345"/>
    </source>
</evidence>
<evidence type="ECO:0000305" key="2"/>